<dbReference type="EC" id="3.1.-.-" evidence="2"/>
<dbReference type="EMBL" id="CY005830">
    <property type="protein sequence ID" value="ABB20528.1"/>
    <property type="molecule type" value="Genomic_RNA"/>
</dbReference>
<dbReference type="SMR" id="Q20P00"/>
<dbReference type="MEROPS" id="S62.001"/>
<dbReference type="Proteomes" id="UP000007770">
    <property type="component" value="Genome"/>
</dbReference>
<dbReference type="GO" id="GO:0030430">
    <property type="term" value="C:host cell cytoplasm"/>
    <property type="evidence" value="ECO:0007669"/>
    <property type="project" value="UniProtKB-SubCell"/>
</dbReference>
<dbReference type="GO" id="GO:0042025">
    <property type="term" value="C:host cell nucleus"/>
    <property type="evidence" value="ECO:0007669"/>
    <property type="project" value="UniProtKB-SubCell"/>
</dbReference>
<dbReference type="GO" id="GO:0004519">
    <property type="term" value="F:endonuclease activity"/>
    <property type="evidence" value="ECO:0007669"/>
    <property type="project" value="UniProtKB-KW"/>
</dbReference>
<dbReference type="GO" id="GO:0046872">
    <property type="term" value="F:metal ion binding"/>
    <property type="evidence" value="ECO:0007669"/>
    <property type="project" value="UniProtKB-KW"/>
</dbReference>
<dbReference type="GO" id="GO:0003723">
    <property type="term" value="F:RNA binding"/>
    <property type="evidence" value="ECO:0007669"/>
    <property type="project" value="UniProtKB-UniRule"/>
</dbReference>
<dbReference type="GO" id="GO:0075526">
    <property type="term" value="P:cap snatching"/>
    <property type="evidence" value="ECO:0007669"/>
    <property type="project" value="UniProtKB-UniRule"/>
</dbReference>
<dbReference type="GO" id="GO:0006351">
    <property type="term" value="P:DNA-templated transcription"/>
    <property type="evidence" value="ECO:0007669"/>
    <property type="project" value="UniProtKB-UniRule"/>
</dbReference>
<dbReference type="GO" id="GO:0039657">
    <property type="term" value="P:symbiont-mediated suppression of host gene expression"/>
    <property type="evidence" value="ECO:0007669"/>
    <property type="project" value="UniProtKB-KW"/>
</dbReference>
<dbReference type="GO" id="GO:0039523">
    <property type="term" value="P:symbiont-mediated suppression of host mRNA transcription via inhibition of RNA polymerase II activity"/>
    <property type="evidence" value="ECO:0007669"/>
    <property type="project" value="UniProtKB-UniRule"/>
</dbReference>
<dbReference type="GO" id="GO:0039694">
    <property type="term" value="P:viral RNA genome replication"/>
    <property type="evidence" value="ECO:0007669"/>
    <property type="project" value="InterPro"/>
</dbReference>
<dbReference type="GO" id="GO:0075523">
    <property type="term" value="P:viral translational frameshifting"/>
    <property type="evidence" value="ECO:0007669"/>
    <property type="project" value="UniProtKB-KW"/>
</dbReference>
<dbReference type="FunFam" id="3.40.91.90:FF:000001">
    <property type="entry name" value="Polymerase acidic protein"/>
    <property type="match status" value="1"/>
</dbReference>
<dbReference type="Gene3D" id="3.40.91.90">
    <property type="entry name" value="Influenza RNA-dependent RNA polymerase subunit PA, endonuclease domain"/>
    <property type="match status" value="1"/>
</dbReference>
<dbReference type="HAMAP" id="MF_04063">
    <property type="entry name" value="INFV_PA"/>
    <property type="match status" value="1"/>
</dbReference>
<dbReference type="InterPro" id="IPR037534">
    <property type="entry name" value="INFV_PA"/>
</dbReference>
<dbReference type="InterPro" id="IPR001009">
    <property type="entry name" value="PA/PA-X"/>
</dbReference>
<dbReference type="InterPro" id="IPR038372">
    <property type="entry name" value="PA/PA-X_sf"/>
</dbReference>
<dbReference type="Pfam" id="PF00603">
    <property type="entry name" value="Flu_PA"/>
    <property type="match status" value="1"/>
</dbReference>
<organism>
    <name type="scientific">Influenza A virus (strain A/Turkey/Ontario/6118/1968 H8N4)</name>
    <dbReference type="NCBI Taxonomy" id="311175"/>
    <lineage>
        <taxon>Viruses</taxon>
        <taxon>Riboviria</taxon>
        <taxon>Orthornavirae</taxon>
        <taxon>Negarnaviricota</taxon>
        <taxon>Polyploviricotina</taxon>
        <taxon>Insthoviricetes</taxon>
        <taxon>Articulavirales</taxon>
        <taxon>Orthomyxoviridae</taxon>
        <taxon>Alphainfluenzavirus</taxon>
        <taxon>Alphainfluenzavirus influenzae</taxon>
        <taxon>Influenza A virus</taxon>
    </lineage>
</organism>
<feature type="chain" id="PRO_0000274803" description="Polymerase acidic protein">
    <location>
        <begin position="1"/>
        <end position="716"/>
    </location>
</feature>
<feature type="short sequence motif" description="Nuclear localization signal 1 (NLS1)" evidence="1 2">
    <location>
        <begin position="124"/>
        <end position="139"/>
    </location>
</feature>
<feature type="short sequence motif" description="Nuclear localization signal 2 (NLS2)" evidence="1 2">
    <location>
        <begin position="184"/>
        <end position="247"/>
    </location>
</feature>
<feature type="binding site" evidence="2">
    <location>
        <position position="41"/>
    </location>
    <ligand>
        <name>Mn(2+)</name>
        <dbReference type="ChEBI" id="CHEBI:29035"/>
        <label>1</label>
    </ligand>
</feature>
<feature type="binding site" evidence="2">
    <location>
        <position position="80"/>
    </location>
    <ligand>
        <name>Mn(2+)</name>
        <dbReference type="ChEBI" id="CHEBI:29035"/>
        <label>2</label>
    </ligand>
</feature>
<feature type="binding site" evidence="2">
    <location>
        <position position="108"/>
    </location>
    <ligand>
        <name>Mn(2+)</name>
        <dbReference type="ChEBI" id="CHEBI:29035"/>
        <label>1</label>
    </ligand>
</feature>
<feature type="binding site" evidence="2">
    <location>
        <position position="108"/>
    </location>
    <ligand>
        <name>Mn(2+)</name>
        <dbReference type="ChEBI" id="CHEBI:29035"/>
        <label>2</label>
    </ligand>
</feature>
<feature type="binding site" evidence="2">
    <location>
        <position position="119"/>
    </location>
    <ligand>
        <name>Mn(2+)</name>
        <dbReference type="ChEBI" id="CHEBI:29035"/>
        <label>1</label>
    </ligand>
</feature>
<feature type="binding site" evidence="2">
    <location>
        <position position="120"/>
    </location>
    <ligand>
        <name>Mn(2+)</name>
        <dbReference type="ChEBI" id="CHEBI:29035"/>
        <label>1</label>
    </ligand>
</feature>
<organismHost>
    <name type="scientific">Aves</name>
    <dbReference type="NCBI Taxonomy" id="8782"/>
</organismHost>
<proteinExistence type="inferred from homology"/>
<sequence length="716" mass="82436">MEDFVRQCFNPMIVELAEKAMKEYGEDPKIETNKFAAICTHLEVCFMYSDFHFIDERGESIIVESGDPNALLKHRFEIIEGRDRTMAWTVVNSICNTTGVEKPKFLPDLYDYKGNRFIEIGVTRREVHIYYLEKANKIKSEKTHIHIFSFTGEEMATKADYTLDEESRARIKTRLFTIRQEMASRGLWDSFRQSERGEETIEERFEITGTMRRLADQSLPPNFSSLENFRAYVDGFEPNGCIEGKLSQMSKEVNARIEPFLKTTPRPLKLPDGPPCSQRSKFLLMDALKLSIEDPSHEGEGIPLYDAIKCMKTFFGWKEPNVVKPHEKGINPNYLLAWKQVLAELQDIENEEKIPKTKNMKKTSQLKWALGENMAPEKVDFEDCKDVSDLKQYDSDEPEPRSLASWIQSEFNKACELTDSSWIELDEIGEDVAPIEHIASMRRNYFTAEVSHCRATEYIMKGVYINTALLNASCAAMDDFQLIPMISKCRTKEGRRKTNLYGFIIKGRSHLRNDTDVVNFVSMEFSLTDPRLEPHKWEKYCVLEIGDMLLRTAIGQVSRPMFLYVRTNGTSKIKMKWGMEMRRCLLQSLQQIESMIEAESSVKEKDMTKEFFENKSETWPIGESPKGVEEGSIGKVCRTLLAKSVFNSLYASPQLEGFSAESRKLLLIVQALRDNLEPGTFDLGGLYEAIEECLINDPWVLLNASWFNSFLTHALR</sequence>
<comment type="function">
    <text evidence="2">Plays an essential role in viral RNA transcription and replication by forming the heterotrimeric polymerase complex together with PB1 and PB2 subunits. The complex transcribes viral mRNAs by using a unique mechanism called cap-snatching. It consists in the hijacking and cleavage of host capped pre-mRNAs. These short capped RNAs are then used as primers for viral mRNAs. The PB2 subunit is responsible for the binding of the 5' cap of cellular pre-mRNAs which are subsequently cleaved after 10-13 nucleotides by the PA subunit that carries the endonuclease activity.</text>
</comment>
<comment type="cofactor">
    <cofactor evidence="2">
        <name>Mn(2+)</name>
        <dbReference type="ChEBI" id="CHEBI:29035"/>
    </cofactor>
    <text evidence="2">Binds 2 manganese ions per subunit.</text>
</comment>
<comment type="subunit">
    <text evidence="1 2">Influenza RNA polymerase is composed of three subunits: PB1, PB2 and PA. Interacts (via C-terminus) with PB1 (via N-terminus).</text>
</comment>
<comment type="subcellular location">
    <subcellularLocation>
        <location evidence="2">Host cytoplasm</location>
    </subcellularLocation>
    <subcellularLocation>
        <location evidence="2">Host nucleus</location>
    </subcellularLocation>
    <text evidence="1 2">PB1 and PA are transported in the host nucleus as a complex.</text>
</comment>
<comment type="alternative products">
    <event type="ribosomal frameshifting"/>
    <isoform>
        <id>Q20P00-1</id>
        <name>PA</name>
        <sequence type="displayed"/>
    </isoform>
    <isoform>
        <id>P0DJV8-1</id>
        <name>PA-X</name>
        <sequence type="external"/>
    </isoform>
</comment>
<comment type="PTM">
    <text evidence="1 2">Phosphorylated on serines and threonines by host kinases, including human casein kinase II.</text>
</comment>
<comment type="similarity">
    <text evidence="2">Belongs to the influenza viruses PA family.</text>
</comment>
<evidence type="ECO:0000250" key="1">
    <source>
        <dbReference type="UniProtKB" id="P03433"/>
    </source>
</evidence>
<evidence type="ECO:0000255" key="2">
    <source>
        <dbReference type="HAMAP-Rule" id="MF_04063"/>
    </source>
</evidence>
<protein>
    <recommendedName>
        <fullName evidence="2">Polymerase acidic protein</fullName>
        <ecNumber evidence="2">3.1.-.-</ecNumber>
    </recommendedName>
    <alternativeName>
        <fullName evidence="2">RNA-directed RNA polymerase subunit P2</fullName>
    </alternativeName>
</protein>
<gene>
    <name evidence="2" type="primary">PA</name>
</gene>
<reference key="1">
    <citation type="journal article" date="2006" name="Science">
        <title>Large-scale sequence analysis of avian influenza isolates.</title>
        <authorList>
            <person name="Obenauer J.C."/>
            <person name="Denson J."/>
            <person name="Mehta P.K."/>
            <person name="Su X."/>
            <person name="Mukatira S."/>
            <person name="Finkelstein D.B."/>
            <person name="Xu X."/>
            <person name="Wang J."/>
            <person name="Ma J."/>
            <person name="Fan Y."/>
            <person name="Rakestraw K.M."/>
            <person name="Webster R.G."/>
            <person name="Hoffmann E."/>
            <person name="Krauss S."/>
            <person name="Zheng J."/>
            <person name="Zhang Z."/>
            <person name="Naeve C.W."/>
        </authorList>
    </citation>
    <scope>NUCLEOTIDE SEQUENCE [GENOMIC RNA]</scope>
</reference>
<name>PA_I68A3</name>
<accession>Q20P00</accession>
<keyword id="KW-1157">Cap snatching</keyword>
<keyword id="KW-0255">Endonuclease</keyword>
<keyword id="KW-1262">Eukaryotic host gene expression shutoff by virus</keyword>
<keyword id="KW-1191">Eukaryotic host transcription shutoff by virus</keyword>
<keyword id="KW-1035">Host cytoplasm</keyword>
<keyword id="KW-1190">Host gene expression shutoff by virus</keyword>
<keyword id="KW-1048">Host nucleus</keyword>
<keyword id="KW-0945">Host-virus interaction</keyword>
<keyword id="KW-0378">Hydrolase</keyword>
<keyword id="KW-1104">Inhibition of host RNA polymerase II by virus</keyword>
<keyword id="KW-0464">Manganese</keyword>
<keyword id="KW-0479">Metal-binding</keyword>
<keyword id="KW-0540">Nuclease</keyword>
<keyword id="KW-0597">Phosphoprotein</keyword>
<keyword id="KW-0688">Ribosomal frameshifting</keyword>